<keyword id="KW-0028">Amino-acid biosynthesis</keyword>
<keyword id="KW-0963">Cytoplasm</keyword>
<keyword id="KW-0413">Isomerase</keyword>
<keyword id="KW-0457">Lysine biosynthesis</keyword>
<keyword id="KW-1185">Reference proteome</keyword>
<protein>
    <recommendedName>
        <fullName evidence="1">Diaminopimelate epimerase</fullName>
        <shortName evidence="1">DAP epimerase</shortName>
        <ecNumber evidence="1">5.1.1.7</ecNumber>
    </recommendedName>
    <alternativeName>
        <fullName evidence="1">PLP-independent amino acid racemase</fullName>
    </alternativeName>
</protein>
<comment type="function">
    <text evidence="1">Catalyzes the stereoinversion of LL-2,6-diaminopimelate (L,L-DAP) to meso-diaminopimelate (meso-DAP), a precursor of L-lysine and an essential component of the bacterial peptidoglycan.</text>
</comment>
<comment type="catalytic activity">
    <reaction evidence="1">
        <text>(2S,6S)-2,6-diaminopimelate = meso-2,6-diaminopimelate</text>
        <dbReference type="Rhea" id="RHEA:15393"/>
        <dbReference type="ChEBI" id="CHEBI:57609"/>
        <dbReference type="ChEBI" id="CHEBI:57791"/>
        <dbReference type="EC" id="5.1.1.7"/>
    </reaction>
</comment>
<comment type="pathway">
    <text evidence="1">Amino-acid biosynthesis; L-lysine biosynthesis via DAP pathway; DL-2,6-diaminopimelate from LL-2,6-diaminopimelate: step 1/1.</text>
</comment>
<comment type="subunit">
    <text evidence="1">Homodimer.</text>
</comment>
<comment type="subcellular location">
    <subcellularLocation>
        <location evidence="1">Cytoplasm</location>
    </subcellularLocation>
</comment>
<comment type="similarity">
    <text evidence="1">Belongs to the diaminopimelate epimerase family.</text>
</comment>
<evidence type="ECO:0000255" key="1">
    <source>
        <dbReference type="HAMAP-Rule" id="MF_00197"/>
    </source>
</evidence>
<organism>
    <name type="scientific">Elusimicrobium minutum (strain Pei191)</name>
    <dbReference type="NCBI Taxonomy" id="445932"/>
    <lineage>
        <taxon>Bacteria</taxon>
        <taxon>Pseudomonadati</taxon>
        <taxon>Elusimicrobiota</taxon>
        <taxon>Elusimicrobia</taxon>
        <taxon>Elusimicrobiales</taxon>
        <taxon>Elusimicrobiaceae</taxon>
        <taxon>Elusimicrobium</taxon>
    </lineage>
</organism>
<accession>B2KDH2</accession>
<gene>
    <name evidence="1" type="primary">dapF</name>
    <name type="ordered locus">Emin_1015</name>
</gene>
<sequence length="274" mass="29503">MEFVKYQGLGNDFILIDCVKIKIDGLNALGKKLCDRHFGIGADGLIAVFPSASADYKIRIINSDGTEPEMCGNGIRCAMRFVFDYIKPQRKLTFETLAGPIKTELLAENLVKVDMGAPKLTAAQIPLNISDSDGRAVDIPVKLEGGKIKGTGVSMGNPHFVIFVEDIKKTDVAKTGKEVENNTAFPQKTNVEFVQVITPSRLCMKVWERGVGITLACGTGACASLVAGVLNNKTERLALVELDGGQLTVEWPDDGASVFMTGPATEVFSGVFKE</sequence>
<reference key="1">
    <citation type="journal article" date="2009" name="Appl. Environ. Microbiol.">
        <title>Genomic analysis of 'Elusimicrobium minutum,' the first cultivated representative of the phylum 'Elusimicrobia' (formerly termite group 1).</title>
        <authorList>
            <person name="Herlemann D.P.R."/>
            <person name="Geissinger O."/>
            <person name="Ikeda-Ohtsubo W."/>
            <person name="Kunin V."/>
            <person name="Sun H."/>
            <person name="Lapidus A."/>
            <person name="Hugenholtz P."/>
            <person name="Brune A."/>
        </authorList>
    </citation>
    <scope>NUCLEOTIDE SEQUENCE [LARGE SCALE GENOMIC DNA]</scope>
    <source>
        <strain>Pei191</strain>
    </source>
</reference>
<name>DAPF_ELUMP</name>
<dbReference type="EC" id="5.1.1.7" evidence="1"/>
<dbReference type="EMBL" id="CP001055">
    <property type="protein sequence ID" value="ACC98568.1"/>
    <property type="molecule type" value="Genomic_DNA"/>
</dbReference>
<dbReference type="RefSeq" id="WP_012415183.1">
    <property type="nucleotide sequence ID" value="NC_010644.1"/>
</dbReference>
<dbReference type="SMR" id="B2KDH2"/>
<dbReference type="STRING" id="445932.Emin_1015"/>
<dbReference type="KEGG" id="emi:Emin_1015"/>
<dbReference type="HOGENOM" id="CLU_053306_3_0_0"/>
<dbReference type="OrthoDB" id="9805408at2"/>
<dbReference type="UniPathway" id="UPA00034">
    <property type="reaction ID" value="UER00025"/>
</dbReference>
<dbReference type="Proteomes" id="UP000001029">
    <property type="component" value="Chromosome"/>
</dbReference>
<dbReference type="GO" id="GO:0005829">
    <property type="term" value="C:cytosol"/>
    <property type="evidence" value="ECO:0007669"/>
    <property type="project" value="TreeGrafter"/>
</dbReference>
<dbReference type="GO" id="GO:0008837">
    <property type="term" value="F:diaminopimelate epimerase activity"/>
    <property type="evidence" value="ECO:0007669"/>
    <property type="project" value="UniProtKB-UniRule"/>
</dbReference>
<dbReference type="GO" id="GO:0009089">
    <property type="term" value="P:lysine biosynthetic process via diaminopimelate"/>
    <property type="evidence" value="ECO:0007669"/>
    <property type="project" value="UniProtKB-UniRule"/>
</dbReference>
<dbReference type="Gene3D" id="3.10.310.10">
    <property type="entry name" value="Diaminopimelate Epimerase, Chain A, domain 1"/>
    <property type="match status" value="2"/>
</dbReference>
<dbReference type="HAMAP" id="MF_00197">
    <property type="entry name" value="DAP_epimerase"/>
    <property type="match status" value="1"/>
</dbReference>
<dbReference type="InterPro" id="IPR018510">
    <property type="entry name" value="DAP_epimerase_AS"/>
</dbReference>
<dbReference type="InterPro" id="IPR001653">
    <property type="entry name" value="DAP_epimerase_DapF"/>
</dbReference>
<dbReference type="NCBIfam" id="TIGR00652">
    <property type="entry name" value="DapF"/>
    <property type="match status" value="1"/>
</dbReference>
<dbReference type="PANTHER" id="PTHR31689:SF0">
    <property type="entry name" value="DIAMINOPIMELATE EPIMERASE"/>
    <property type="match status" value="1"/>
</dbReference>
<dbReference type="PANTHER" id="PTHR31689">
    <property type="entry name" value="DIAMINOPIMELATE EPIMERASE, CHLOROPLASTIC"/>
    <property type="match status" value="1"/>
</dbReference>
<dbReference type="Pfam" id="PF01678">
    <property type="entry name" value="DAP_epimerase"/>
    <property type="match status" value="2"/>
</dbReference>
<dbReference type="SUPFAM" id="SSF54506">
    <property type="entry name" value="Diaminopimelate epimerase-like"/>
    <property type="match status" value="2"/>
</dbReference>
<dbReference type="PROSITE" id="PS01326">
    <property type="entry name" value="DAP_EPIMERASE"/>
    <property type="match status" value="1"/>
</dbReference>
<proteinExistence type="inferred from homology"/>
<feature type="chain" id="PRO_1000099235" description="Diaminopimelate epimerase">
    <location>
        <begin position="1"/>
        <end position="274"/>
    </location>
</feature>
<feature type="active site" description="Proton donor" evidence="1">
    <location>
        <position position="71"/>
    </location>
</feature>
<feature type="active site" description="Proton acceptor" evidence="1">
    <location>
        <position position="217"/>
    </location>
</feature>
<feature type="binding site" evidence="1">
    <location>
        <position position="11"/>
    </location>
    <ligand>
        <name>substrate</name>
    </ligand>
</feature>
<feature type="binding site" evidence="1">
    <location>
        <position position="62"/>
    </location>
    <ligand>
        <name>substrate</name>
    </ligand>
</feature>
<feature type="binding site" evidence="1">
    <location>
        <begin position="72"/>
        <end position="73"/>
    </location>
    <ligand>
        <name>substrate</name>
    </ligand>
</feature>
<feature type="binding site" evidence="1">
    <location>
        <position position="157"/>
    </location>
    <ligand>
        <name>substrate</name>
    </ligand>
</feature>
<feature type="binding site" evidence="1">
    <location>
        <position position="190"/>
    </location>
    <ligand>
        <name>substrate</name>
    </ligand>
</feature>
<feature type="binding site" evidence="1">
    <location>
        <begin position="208"/>
        <end position="209"/>
    </location>
    <ligand>
        <name>substrate</name>
    </ligand>
</feature>
<feature type="binding site" evidence="1">
    <location>
        <begin position="218"/>
        <end position="219"/>
    </location>
    <ligand>
        <name>substrate</name>
    </ligand>
</feature>
<feature type="site" description="Could be important to modulate the pK values of the two catalytic cysteine residues" evidence="1">
    <location>
        <position position="159"/>
    </location>
</feature>
<feature type="site" description="Could be important to modulate the pK values of the two catalytic cysteine residues" evidence="1">
    <location>
        <position position="208"/>
    </location>
</feature>